<gene>
    <name evidence="1" type="primary">accD</name>
    <name type="ordered locus">XCC2540</name>
</gene>
<evidence type="ECO:0000255" key="1">
    <source>
        <dbReference type="HAMAP-Rule" id="MF_01395"/>
    </source>
</evidence>
<evidence type="ECO:0000255" key="2">
    <source>
        <dbReference type="PROSITE-ProRule" id="PRU01136"/>
    </source>
</evidence>
<evidence type="ECO:0000256" key="3">
    <source>
        <dbReference type="SAM" id="MobiDB-lite"/>
    </source>
</evidence>
<organism>
    <name type="scientific">Xanthomonas campestris pv. campestris (strain ATCC 33913 / DSM 3586 / NCPPB 528 / LMG 568 / P 25)</name>
    <dbReference type="NCBI Taxonomy" id="190485"/>
    <lineage>
        <taxon>Bacteria</taxon>
        <taxon>Pseudomonadati</taxon>
        <taxon>Pseudomonadota</taxon>
        <taxon>Gammaproteobacteria</taxon>
        <taxon>Lysobacterales</taxon>
        <taxon>Lysobacteraceae</taxon>
        <taxon>Xanthomonas</taxon>
    </lineage>
</organism>
<reference key="1">
    <citation type="journal article" date="2002" name="Nature">
        <title>Comparison of the genomes of two Xanthomonas pathogens with differing host specificities.</title>
        <authorList>
            <person name="da Silva A.C.R."/>
            <person name="Ferro J.A."/>
            <person name="Reinach F.C."/>
            <person name="Farah C.S."/>
            <person name="Furlan L.R."/>
            <person name="Quaggio R.B."/>
            <person name="Monteiro-Vitorello C.B."/>
            <person name="Van Sluys M.A."/>
            <person name="Almeida N.F. Jr."/>
            <person name="Alves L.M.C."/>
            <person name="do Amaral A.M."/>
            <person name="Bertolini M.C."/>
            <person name="Camargo L.E.A."/>
            <person name="Camarotte G."/>
            <person name="Cannavan F."/>
            <person name="Cardozo J."/>
            <person name="Chambergo F."/>
            <person name="Ciapina L.P."/>
            <person name="Cicarelli R.M.B."/>
            <person name="Coutinho L.L."/>
            <person name="Cursino-Santos J.R."/>
            <person name="El-Dorry H."/>
            <person name="Faria J.B."/>
            <person name="Ferreira A.J.S."/>
            <person name="Ferreira R.C.C."/>
            <person name="Ferro M.I.T."/>
            <person name="Formighieri E.F."/>
            <person name="Franco M.C."/>
            <person name="Greggio C.C."/>
            <person name="Gruber A."/>
            <person name="Katsuyama A.M."/>
            <person name="Kishi L.T."/>
            <person name="Leite R.P."/>
            <person name="Lemos E.G.M."/>
            <person name="Lemos M.V.F."/>
            <person name="Locali E.C."/>
            <person name="Machado M.A."/>
            <person name="Madeira A.M.B.N."/>
            <person name="Martinez-Rossi N.M."/>
            <person name="Martins E.C."/>
            <person name="Meidanis J."/>
            <person name="Menck C.F.M."/>
            <person name="Miyaki C.Y."/>
            <person name="Moon D.H."/>
            <person name="Moreira L.M."/>
            <person name="Novo M.T.M."/>
            <person name="Okura V.K."/>
            <person name="Oliveira M.C."/>
            <person name="Oliveira V.R."/>
            <person name="Pereira H.A."/>
            <person name="Rossi A."/>
            <person name="Sena J.A.D."/>
            <person name="Silva C."/>
            <person name="de Souza R.F."/>
            <person name="Spinola L.A.F."/>
            <person name="Takita M.A."/>
            <person name="Tamura R.E."/>
            <person name="Teixeira E.C."/>
            <person name="Tezza R.I.D."/>
            <person name="Trindade dos Santos M."/>
            <person name="Truffi D."/>
            <person name="Tsai S.M."/>
            <person name="White F.F."/>
            <person name="Setubal J.C."/>
            <person name="Kitajima J.P."/>
        </authorList>
    </citation>
    <scope>NUCLEOTIDE SEQUENCE [LARGE SCALE GENOMIC DNA]</scope>
    <source>
        <strain>ATCC 33913 / DSM 3586 / NCPPB 528 / LMG 568 / P 25</strain>
    </source>
</reference>
<keyword id="KW-0067">ATP-binding</keyword>
<keyword id="KW-0963">Cytoplasm</keyword>
<keyword id="KW-0275">Fatty acid biosynthesis</keyword>
<keyword id="KW-0276">Fatty acid metabolism</keyword>
<keyword id="KW-0444">Lipid biosynthesis</keyword>
<keyword id="KW-0443">Lipid metabolism</keyword>
<keyword id="KW-0479">Metal-binding</keyword>
<keyword id="KW-0547">Nucleotide-binding</keyword>
<keyword id="KW-1185">Reference proteome</keyword>
<keyword id="KW-0808">Transferase</keyword>
<keyword id="KW-0862">Zinc</keyword>
<keyword id="KW-0863">Zinc-finger</keyword>
<comment type="function">
    <text evidence="1">Component of the acetyl coenzyme A carboxylase (ACC) complex. Biotin carboxylase (BC) catalyzes the carboxylation of biotin on its carrier protein (BCCP) and then the CO(2) group is transferred by the transcarboxylase to acetyl-CoA to form malonyl-CoA.</text>
</comment>
<comment type="catalytic activity">
    <reaction evidence="1">
        <text>N(6)-carboxybiotinyl-L-lysyl-[protein] + acetyl-CoA = N(6)-biotinyl-L-lysyl-[protein] + malonyl-CoA</text>
        <dbReference type="Rhea" id="RHEA:54728"/>
        <dbReference type="Rhea" id="RHEA-COMP:10505"/>
        <dbReference type="Rhea" id="RHEA-COMP:10506"/>
        <dbReference type="ChEBI" id="CHEBI:57288"/>
        <dbReference type="ChEBI" id="CHEBI:57384"/>
        <dbReference type="ChEBI" id="CHEBI:83144"/>
        <dbReference type="ChEBI" id="CHEBI:83145"/>
        <dbReference type="EC" id="2.1.3.15"/>
    </reaction>
</comment>
<comment type="cofactor">
    <cofactor evidence="1">
        <name>Zn(2+)</name>
        <dbReference type="ChEBI" id="CHEBI:29105"/>
    </cofactor>
    <text evidence="1">Binds 1 zinc ion per subunit.</text>
</comment>
<comment type="pathway">
    <text evidence="1">Lipid metabolism; malonyl-CoA biosynthesis; malonyl-CoA from acetyl-CoA: step 1/1.</text>
</comment>
<comment type="subunit">
    <text evidence="1">Acetyl-CoA carboxylase is a heterohexamer composed of biotin carboxyl carrier protein (AccB), biotin carboxylase (AccC) and two subunits each of ACCase subunit alpha (AccA) and ACCase subunit beta (AccD).</text>
</comment>
<comment type="subcellular location">
    <subcellularLocation>
        <location evidence="1">Cytoplasm</location>
    </subcellularLocation>
</comment>
<comment type="similarity">
    <text evidence="1">Belongs to the AccD/PCCB family.</text>
</comment>
<name>ACCD_XANCP</name>
<accession>Q8P7S1</accession>
<protein>
    <recommendedName>
        <fullName evidence="1">Acetyl-coenzyme A carboxylase carboxyl transferase subunit beta</fullName>
        <shortName evidence="1">ACCase subunit beta</shortName>
        <shortName evidence="1">Acetyl-CoA carboxylase carboxyltransferase subunit beta</shortName>
        <ecNumber evidence="1">2.1.3.15</ecNumber>
    </recommendedName>
</protein>
<proteinExistence type="inferred from homology"/>
<dbReference type="EC" id="2.1.3.15" evidence="1"/>
<dbReference type="EMBL" id="AE008922">
    <property type="protein sequence ID" value="AAM41812.1"/>
    <property type="molecule type" value="Genomic_DNA"/>
</dbReference>
<dbReference type="RefSeq" id="NP_637888.1">
    <property type="nucleotide sequence ID" value="NC_003902.1"/>
</dbReference>
<dbReference type="RefSeq" id="WP_011037670.1">
    <property type="nucleotide sequence ID" value="NC_003902.1"/>
</dbReference>
<dbReference type="SMR" id="Q8P7S1"/>
<dbReference type="STRING" id="190485.XCC2540"/>
<dbReference type="EnsemblBacteria" id="AAM41812">
    <property type="protein sequence ID" value="AAM41812"/>
    <property type="gene ID" value="XCC2540"/>
</dbReference>
<dbReference type="KEGG" id="xcc:XCC2540"/>
<dbReference type="PATRIC" id="fig|190485.4.peg.2705"/>
<dbReference type="eggNOG" id="COG0777">
    <property type="taxonomic scope" value="Bacteria"/>
</dbReference>
<dbReference type="HOGENOM" id="CLU_015486_1_0_6"/>
<dbReference type="OrthoDB" id="9772975at2"/>
<dbReference type="UniPathway" id="UPA00655">
    <property type="reaction ID" value="UER00711"/>
</dbReference>
<dbReference type="Proteomes" id="UP000001010">
    <property type="component" value="Chromosome"/>
</dbReference>
<dbReference type="GO" id="GO:0009329">
    <property type="term" value="C:acetate CoA-transferase complex"/>
    <property type="evidence" value="ECO:0000318"/>
    <property type="project" value="GO_Central"/>
</dbReference>
<dbReference type="GO" id="GO:0003989">
    <property type="term" value="F:acetyl-CoA carboxylase activity"/>
    <property type="evidence" value="ECO:0007669"/>
    <property type="project" value="InterPro"/>
</dbReference>
<dbReference type="GO" id="GO:0005524">
    <property type="term" value="F:ATP binding"/>
    <property type="evidence" value="ECO:0007669"/>
    <property type="project" value="UniProtKB-KW"/>
</dbReference>
<dbReference type="GO" id="GO:0016743">
    <property type="term" value="F:carboxyl- or carbamoyltransferase activity"/>
    <property type="evidence" value="ECO:0007669"/>
    <property type="project" value="UniProtKB-UniRule"/>
</dbReference>
<dbReference type="GO" id="GO:0008270">
    <property type="term" value="F:zinc ion binding"/>
    <property type="evidence" value="ECO:0007669"/>
    <property type="project" value="UniProtKB-UniRule"/>
</dbReference>
<dbReference type="GO" id="GO:0006633">
    <property type="term" value="P:fatty acid biosynthetic process"/>
    <property type="evidence" value="ECO:0000318"/>
    <property type="project" value="GO_Central"/>
</dbReference>
<dbReference type="GO" id="GO:2001295">
    <property type="term" value="P:malonyl-CoA biosynthetic process"/>
    <property type="evidence" value="ECO:0000318"/>
    <property type="project" value="GO_Central"/>
</dbReference>
<dbReference type="GO" id="GO:0017148">
    <property type="term" value="P:negative regulation of translation"/>
    <property type="evidence" value="ECO:0000318"/>
    <property type="project" value="GO_Central"/>
</dbReference>
<dbReference type="Gene3D" id="3.90.226.10">
    <property type="entry name" value="2-enoyl-CoA Hydratase, Chain A, domain 1"/>
    <property type="match status" value="1"/>
</dbReference>
<dbReference type="HAMAP" id="MF_01395">
    <property type="entry name" value="AcetylCoA_CT_beta"/>
    <property type="match status" value="1"/>
</dbReference>
<dbReference type="InterPro" id="IPR034733">
    <property type="entry name" value="AcCoA_carboxyl_beta"/>
</dbReference>
<dbReference type="InterPro" id="IPR000438">
    <property type="entry name" value="Acetyl_CoA_COase_Trfase_b_su"/>
</dbReference>
<dbReference type="InterPro" id="IPR029045">
    <property type="entry name" value="ClpP/crotonase-like_dom_sf"/>
</dbReference>
<dbReference type="InterPro" id="IPR011762">
    <property type="entry name" value="COA_CT_N"/>
</dbReference>
<dbReference type="InterPro" id="IPR041010">
    <property type="entry name" value="Znf-ACC"/>
</dbReference>
<dbReference type="NCBIfam" id="TIGR00515">
    <property type="entry name" value="accD"/>
    <property type="match status" value="1"/>
</dbReference>
<dbReference type="PANTHER" id="PTHR42995">
    <property type="entry name" value="ACETYL-COENZYME A CARBOXYLASE CARBOXYL TRANSFERASE SUBUNIT BETA, CHLOROPLASTIC"/>
    <property type="match status" value="1"/>
</dbReference>
<dbReference type="PANTHER" id="PTHR42995:SF5">
    <property type="entry name" value="ACETYL-COENZYME A CARBOXYLASE CARBOXYL TRANSFERASE SUBUNIT BETA, CHLOROPLASTIC"/>
    <property type="match status" value="1"/>
</dbReference>
<dbReference type="Pfam" id="PF01039">
    <property type="entry name" value="Carboxyl_trans"/>
    <property type="match status" value="1"/>
</dbReference>
<dbReference type="Pfam" id="PF17848">
    <property type="entry name" value="Zn_ribbon_ACC"/>
    <property type="match status" value="1"/>
</dbReference>
<dbReference type="PRINTS" id="PR01070">
    <property type="entry name" value="ACCCTRFRASEB"/>
</dbReference>
<dbReference type="SUPFAM" id="SSF52096">
    <property type="entry name" value="ClpP/crotonase"/>
    <property type="match status" value="1"/>
</dbReference>
<dbReference type="PROSITE" id="PS50980">
    <property type="entry name" value="COA_CT_NTER"/>
    <property type="match status" value="1"/>
</dbReference>
<feature type="chain" id="PRO_0000359096" description="Acetyl-coenzyme A carboxylase carboxyl transferase subunit beta">
    <location>
        <begin position="1"/>
        <end position="295"/>
    </location>
</feature>
<feature type="domain" description="CoA carboxyltransferase N-terminal" evidence="2">
    <location>
        <begin position="28"/>
        <end position="295"/>
    </location>
</feature>
<feature type="zinc finger region" description="C4-type" evidence="1">
    <location>
        <begin position="32"/>
        <end position="54"/>
    </location>
</feature>
<feature type="region of interest" description="Disordered" evidence="3">
    <location>
        <begin position="1"/>
        <end position="20"/>
    </location>
</feature>
<feature type="binding site" evidence="1">
    <location>
        <position position="32"/>
    </location>
    <ligand>
        <name>Zn(2+)</name>
        <dbReference type="ChEBI" id="CHEBI:29105"/>
    </ligand>
</feature>
<feature type="binding site" evidence="1">
    <location>
        <position position="35"/>
    </location>
    <ligand>
        <name>Zn(2+)</name>
        <dbReference type="ChEBI" id="CHEBI:29105"/>
    </ligand>
</feature>
<feature type="binding site" evidence="1">
    <location>
        <position position="51"/>
    </location>
    <ligand>
        <name>Zn(2+)</name>
        <dbReference type="ChEBI" id="CHEBI:29105"/>
    </ligand>
</feature>
<feature type="binding site" evidence="1">
    <location>
        <position position="54"/>
    </location>
    <ligand>
        <name>Zn(2+)</name>
        <dbReference type="ChEBI" id="CHEBI:29105"/>
    </ligand>
</feature>
<sequence length="295" mass="32014">MSWLSKLMPSGIRTENTPAKKRSVPEGLWEKCSNCGSALYGPELEENLEVCPKCDHHMAIRARARLAALFDLDSPTTEIAAQLGPVDVLKFKDQKKYGERIKASQKSSGEYDALIAMRGMLKGNPLVAAAFDFAFMGGSMGSVVGERFARAAEVALEVGCPFVCFSASGGARMQEGLFSLMQMAKTSAALGRLREAGLPYISVLTHPTTGGVSASFAMLGDINIAEPHALIGFAGPRVIEQTVRETLPEGFQRSEFLLDHGAIDQICDRRDMRDRIAELTTMMMRQPHPQDADAA</sequence>